<dbReference type="EC" id="7.1.1.2"/>
<dbReference type="EMBL" id="D38016">
    <property type="protein sequence ID" value="BAA07213.2"/>
    <property type="molecule type" value="Genomic_DNA"/>
</dbReference>
<dbReference type="PIR" id="S62130">
    <property type="entry name" value="S62130"/>
</dbReference>
<dbReference type="RefSeq" id="NP_063974.2">
    <property type="nucleotide sequence ID" value="NC_002511.2"/>
</dbReference>
<dbReference type="SMR" id="Q37787"/>
<dbReference type="GeneID" id="809510"/>
<dbReference type="KEGG" id="bvg:809510"/>
<dbReference type="GO" id="GO:0005743">
    <property type="term" value="C:mitochondrial inner membrane"/>
    <property type="evidence" value="ECO:0007669"/>
    <property type="project" value="UniProtKB-SubCell"/>
</dbReference>
<dbReference type="GO" id="GO:0008137">
    <property type="term" value="F:NADH dehydrogenase (ubiquinone) activity"/>
    <property type="evidence" value="ECO:0007669"/>
    <property type="project" value="UniProtKB-EC"/>
</dbReference>
<dbReference type="FunFam" id="3.30.460.80:FF:000005">
    <property type="entry name" value="NADH dehydrogenase subunit 9"/>
    <property type="match status" value="1"/>
</dbReference>
<dbReference type="Gene3D" id="3.30.460.80">
    <property type="entry name" value="NADH:ubiquinone oxidoreductase, 30kDa subunit"/>
    <property type="match status" value="1"/>
</dbReference>
<dbReference type="HAMAP" id="MF_01357">
    <property type="entry name" value="NDH1_NuoC"/>
    <property type="match status" value="1"/>
</dbReference>
<dbReference type="InterPro" id="IPR010218">
    <property type="entry name" value="NADH_DH_suC"/>
</dbReference>
<dbReference type="InterPro" id="IPR037232">
    <property type="entry name" value="NADH_quin_OxRdtase_su_C/D-like"/>
</dbReference>
<dbReference type="InterPro" id="IPR001268">
    <property type="entry name" value="NADH_UbQ_OxRdtase_30kDa_su"/>
</dbReference>
<dbReference type="InterPro" id="IPR020396">
    <property type="entry name" value="NADH_UbQ_OxRdtase_CS"/>
</dbReference>
<dbReference type="NCBIfam" id="TIGR01961">
    <property type="entry name" value="NuoC_fam"/>
    <property type="match status" value="1"/>
</dbReference>
<dbReference type="NCBIfam" id="NF004733">
    <property type="entry name" value="PRK06074.1-5"/>
    <property type="match status" value="1"/>
</dbReference>
<dbReference type="PANTHER" id="PTHR10884:SF14">
    <property type="entry name" value="NADH DEHYDROGENASE [UBIQUINONE] IRON-SULFUR PROTEIN 3, MITOCHONDRIAL"/>
    <property type="match status" value="1"/>
</dbReference>
<dbReference type="PANTHER" id="PTHR10884">
    <property type="entry name" value="NADH DEHYDROGENASE UBIQUINONE IRON-SULFUR PROTEIN 3"/>
    <property type="match status" value="1"/>
</dbReference>
<dbReference type="Pfam" id="PF00329">
    <property type="entry name" value="Complex1_30kDa"/>
    <property type="match status" value="1"/>
</dbReference>
<dbReference type="SUPFAM" id="SSF143243">
    <property type="entry name" value="Nqo5-like"/>
    <property type="match status" value="1"/>
</dbReference>
<dbReference type="PROSITE" id="PS00542">
    <property type="entry name" value="COMPLEX1_30K"/>
    <property type="match status" value="1"/>
</dbReference>
<comment type="function">
    <text evidence="1">Core subunit of the mitochondrial membrane respiratory chain NADH dehydrogenase (Complex I) that is believed to belong to the minimal assembly required for catalysis. Complex I functions in the transfer of electrons from NADH to the respiratory chain. The immediate electron acceptor for the enzyme is believed to be ubiquinone (By similarity).</text>
</comment>
<comment type="catalytic activity">
    <reaction>
        <text>a ubiquinone + NADH + 5 H(+)(in) = a ubiquinol + NAD(+) + 4 H(+)(out)</text>
        <dbReference type="Rhea" id="RHEA:29091"/>
        <dbReference type="Rhea" id="RHEA-COMP:9565"/>
        <dbReference type="Rhea" id="RHEA-COMP:9566"/>
        <dbReference type="ChEBI" id="CHEBI:15378"/>
        <dbReference type="ChEBI" id="CHEBI:16389"/>
        <dbReference type="ChEBI" id="CHEBI:17976"/>
        <dbReference type="ChEBI" id="CHEBI:57540"/>
        <dbReference type="ChEBI" id="CHEBI:57945"/>
        <dbReference type="EC" id="7.1.1.2"/>
    </reaction>
</comment>
<comment type="subunit">
    <text evidence="1">Complex I is composed of about 45 different subunits. This is a component of the iron-sulfur (IP) fragment of the enzyme (By similarity).</text>
</comment>
<comment type="subcellular location">
    <subcellularLocation>
        <location>Mitochondrion inner membrane</location>
        <topology>Peripheral membrane protein</topology>
        <orientation>Matrix side</orientation>
    </subcellularLocation>
</comment>
<comment type="RNA editing">
    <location>
        <position position="31" evidence="2"/>
    </location>
    <location>
        <position position="38" evidence="2"/>
    </location>
    <location>
        <position position="100" evidence="2"/>
    </location>
    <location>
        <position position="110" evidence="2"/>
    </location>
    <location>
        <position position="123" evidence="2"/>
    </location>
</comment>
<comment type="similarity">
    <text evidence="3">Belongs to the complex I 30 kDa subunit family.</text>
</comment>
<geneLocation type="mitochondrion"/>
<keyword id="KW-0249">Electron transport</keyword>
<keyword id="KW-0472">Membrane</keyword>
<keyword id="KW-0496">Mitochondrion</keyword>
<keyword id="KW-0999">Mitochondrion inner membrane</keyword>
<keyword id="KW-0520">NAD</keyword>
<keyword id="KW-0560">Oxidoreductase</keyword>
<keyword id="KW-0679">Respiratory chain</keyword>
<keyword id="KW-0691">RNA editing</keyword>
<keyword id="KW-1278">Translocase</keyword>
<keyword id="KW-0813">Transport</keyword>
<keyword id="KW-0830">Ubiquinone</keyword>
<feature type="chain" id="PRO_0000118639" description="NADH dehydrogenase [ubiquinone] iron-sulfur protein 3">
    <location>
        <begin position="1"/>
        <end position="192"/>
    </location>
</feature>
<accession>Q37787</accession>
<protein>
    <recommendedName>
        <fullName>NADH dehydrogenase [ubiquinone] iron-sulfur protein 3</fullName>
        <ecNumber>7.1.1.2</ecNumber>
    </recommendedName>
    <alternativeName>
        <fullName>NADH dehydrogenase subunit 9</fullName>
    </alternativeName>
</protein>
<sequence>MDNQFIFKYSWETLPKKWVKKIEKSEHGNRFDTNTDYLFQLLCFLKLHTYTRFQVLIDICGVDYPSRKRRFEVVYNLLSTRYNSRIRLQTCADEVTRISLVVSLFPSAGWWEREVWDMFGVSFINHPDLRRILTDYGFEGHPLRKDFPLSGYVEVRYDDPEKRVVSEPIEMTQEFRYFDFASPWEQRNGNEG</sequence>
<organism>
    <name type="scientific">Beta vulgaris</name>
    <name type="common">Sugar beet</name>
    <dbReference type="NCBI Taxonomy" id="161934"/>
    <lineage>
        <taxon>Eukaryota</taxon>
        <taxon>Viridiplantae</taxon>
        <taxon>Streptophyta</taxon>
        <taxon>Embryophyta</taxon>
        <taxon>Tracheophyta</taxon>
        <taxon>Spermatophyta</taxon>
        <taxon>Magnoliopsida</taxon>
        <taxon>eudicotyledons</taxon>
        <taxon>Gunneridae</taxon>
        <taxon>Pentapetalae</taxon>
        <taxon>Caryophyllales</taxon>
        <taxon>Chenopodiaceae</taxon>
        <taxon>Betoideae</taxon>
        <taxon>Beta</taxon>
    </lineage>
</organism>
<name>NDUS3_BETVU</name>
<evidence type="ECO:0000250" key="1"/>
<evidence type="ECO:0000269" key="2">
    <source>
    </source>
</evidence>
<evidence type="ECO:0000305" key="3"/>
<gene>
    <name type="primary">NAD9</name>
</gene>
<proteinExistence type="evidence at transcript level"/>
<reference key="1">
    <citation type="journal article" date="1993" name="Mol. Gen. Genet.">
        <title>The sugar beet mitochondrial genome contains an ORF sharing sequence homology with the gene for the 30 kDa subunit of bovine mitochondrial complex I.</title>
        <authorList>
            <person name="Kubo T."/>
            <person name="Mikami T."/>
            <person name="Kinoshita T."/>
        </authorList>
    </citation>
    <scope>NUCLEOTIDE SEQUENCE [GENOMIC DNA]</scope>
    <scope>RNA EDITING</scope>
    <source>
        <strain>cv. TK81-O</strain>
        <tissue>Tap root</tissue>
    </source>
</reference>